<feature type="chain" id="PRO_0000139765" description="Ammonium transporter Amt2">
    <location>
        <begin position="1"/>
        <end position="420"/>
    </location>
</feature>
<feature type="transmembrane region" description="Helical" evidence="4">
    <location>
        <begin position="34"/>
        <end position="54"/>
    </location>
</feature>
<feature type="transmembrane region" description="Helical" evidence="4">
    <location>
        <begin position="71"/>
        <end position="91"/>
    </location>
</feature>
<feature type="transmembrane region" description="Helical" evidence="4">
    <location>
        <begin position="120"/>
        <end position="140"/>
    </location>
</feature>
<feature type="transmembrane region" description="Helical" evidence="4">
    <location>
        <begin position="149"/>
        <end position="169"/>
    </location>
</feature>
<feature type="transmembrane region" description="Helical" evidence="4">
    <location>
        <begin position="180"/>
        <end position="200"/>
    </location>
</feature>
<feature type="transmembrane region" description="Helical" evidence="4">
    <location>
        <begin position="220"/>
        <end position="240"/>
    </location>
</feature>
<feature type="transmembrane region" description="Helical" evidence="4">
    <location>
        <begin position="250"/>
        <end position="270"/>
    </location>
</feature>
<feature type="transmembrane region" description="Helical" evidence="4">
    <location>
        <begin position="273"/>
        <end position="293"/>
    </location>
</feature>
<feature type="transmembrane region" description="Helical" evidence="4">
    <location>
        <begin position="295"/>
        <end position="315"/>
    </location>
</feature>
<feature type="transmembrane region" description="Helical" evidence="4">
    <location>
        <begin position="339"/>
        <end position="359"/>
    </location>
</feature>
<feature type="transmembrane region" description="Helical" evidence="4">
    <location>
        <begin position="365"/>
        <end position="385"/>
    </location>
</feature>
<feature type="site" description="Twin-His motif. Important for optimum substrate conductance" evidence="2">
    <location>
        <position position="186"/>
    </location>
</feature>
<feature type="site" description="Twin-His motif. Important for optimum substrate conductance" evidence="2">
    <location>
        <position position="334"/>
    </location>
</feature>
<sequence length="420" mass="43786">MWGENIATADLFANATDIHSIVQALTTLANASDVFFLVVMGVLVFMMQWGFAMLEGGQVRKKNVNNVMMKNMVDWLIGCVAWLFIGGILCSKGFDLSAFIDWWKQILGTNWPNNGLDLASWFFGLVFCATAATIVSGGVAERIKFSAYVLISLIITGLLYPLFVYLGPWGASIVPWHDYAGSLVVHGLGGFLALGAIAALGPRIGRFVDGRPVPILGHNIPMAVFGAFALAIGWYGFNVGSSLALGDISGLVCATTTMAMAGGGIGALIASRNDVLFTANGIVAGLVAICSGTDVVSPIGGLIIGLIAGLQVPIVYKLVEKAGLDDVCGVVPVHGTAGVIGAILTGILGLKIFGGAGGVSLIDQIIGAVFCIIYGTGLGYILAKIVGIALGGLRVSEEEEKMGLDMAEHKMPAYPEETVI</sequence>
<dbReference type="EMBL" id="L77117">
    <property type="protein sequence ID" value="AAB99352.1"/>
    <property type="molecule type" value="Genomic_DNA"/>
</dbReference>
<dbReference type="PIR" id="F64467">
    <property type="entry name" value="F64467"/>
</dbReference>
<dbReference type="SMR" id="Q58739"/>
<dbReference type="FunCoup" id="Q58739">
    <property type="interactions" value="11"/>
</dbReference>
<dbReference type="IntAct" id="Q58739">
    <property type="interactions" value="1"/>
</dbReference>
<dbReference type="MINT" id="Q58739"/>
<dbReference type="STRING" id="243232.MJ_1343"/>
<dbReference type="PaxDb" id="243232-MJ_1343"/>
<dbReference type="EnsemblBacteria" id="AAB99352">
    <property type="protein sequence ID" value="AAB99352"/>
    <property type="gene ID" value="MJ_1343"/>
</dbReference>
<dbReference type="KEGG" id="mja:MJ_1343"/>
<dbReference type="eggNOG" id="arCOG04397">
    <property type="taxonomic scope" value="Archaea"/>
</dbReference>
<dbReference type="HOGENOM" id="CLU_000445_33_1_2"/>
<dbReference type="InParanoid" id="Q58739"/>
<dbReference type="PhylomeDB" id="Q58739"/>
<dbReference type="Proteomes" id="UP000000805">
    <property type="component" value="Chromosome"/>
</dbReference>
<dbReference type="GO" id="GO:0005886">
    <property type="term" value="C:plasma membrane"/>
    <property type="evidence" value="ECO:0007669"/>
    <property type="project" value="UniProtKB-SubCell"/>
</dbReference>
<dbReference type="GO" id="GO:0008519">
    <property type="term" value="F:ammonium channel activity"/>
    <property type="evidence" value="ECO:0007669"/>
    <property type="project" value="InterPro"/>
</dbReference>
<dbReference type="GO" id="GO:0097272">
    <property type="term" value="P:ammonium homeostasis"/>
    <property type="evidence" value="ECO:0000318"/>
    <property type="project" value="GO_Central"/>
</dbReference>
<dbReference type="GO" id="GO:0072488">
    <property type="term" value="P:ammonium transmembrane transport"/>
    <property type="evidence" value="ECO:0000318"/>
    <property type="project" value="GO_Central"/>
</dbReference>
<dbReference type="Gene3D" id="1.10.3430.10">
    <property type="entry name" value="Ammonium transporter AmtB like domains"/>
    <property type="match status" value="1"/>
</dbReference>
<dbReference type="InterPro" id="IPR029020">
    <property type="entry name" value="Ammonium/urea_transptr"/>
</dbReference>
<dbReference type="InterPro" id="IPR001905">
    <property type="entry name" value="Ammonium_transpt"/>
</dbReference>
<dbReference type="InterPro" id="IPR018047">
    <property type="entry name" value="Ammonium_transpt_CS"/>
</dbReference>
<dbReference type="InterPro" id="IPR024041">
    <property type="entry name" value="NH4_transpt_AmtB-like_dom"/>
</dbReference>
<dbReference type="NCBIfam" id="TIGR00836">
    <property type="entry name" value="amt"/>
    <property type="match status" value="1"/>
</dbReference>
<dbReference type="PANTHER" id="PTHR11730">
    <property type="entry name" value="AMMONIUM TRANSPORTER"/>
    <property type="match status" value="1"/>
</dbReference>
<dbReference type="PANTHER" id="PTHR11730:SF6">
    <property type="entry name" value="AMMONIUM TRANSPORTER"/>
    <property type="match status" value="1"/>
</dbReference>
<dbReference type="Pfam" id="PF00909">
    <property type="entry name" value="Ammonium_transp"/>
    <property type="match status" value="1"/>
</dbReference>
<dbReference type="SUPFAM" id="SSF111352">
    <property type="entry name" value="Ammonium transporter"/>
    <property type="match status" value="1"/>
</dbReference>
<dbReference type="PROSITE" id="PS01219">
    <property type="entry name" value="AMMONIUM_TRANSP"/>
    <property type="match status" value="1"/>
</dbReference>
<protein>
    <recommendedName>
        <fullName evidence="3">Ammonium transporter Amt2</fullName>
    </recommendedName>
</protein>
<keyword id="KW-0924">Ammonia transport</keyword>
<keyword id="KW-1003">Cell membrane</keyword>
<keyword id="KW-0472">Membrane</keyword>
<keyword id="KW-1185">Reference proteome</keyword>
<keyword id="KW-0812">Transmembrane</keyword>
<keyword id="KW-1133">Transmembrane helix</keyword>
<keyword id="KW-0813">Transport</keyword>
<evidence type="ECO:0000250" key="1">
    <source>
        <dbReference type="UniProtKB" id="O29285"/>
    </source>
</evidence>
<evidence type="ECO:0000250" key="2">
    <source>
        <dbReference type="UniProtKB" id="P69681"/>
    </source>
</evidence>
<evidence type="ECO:0000250" key="3">
    <source>
        <dbReference type="UniProtKB" id="Q60366"/>
    </source>
</evidence>
<evidence type="ECO:0000255" key="4"/>
<evidence type="ECO:0000305" key="5"/>
<accession>Q58739</accession>
<proteinExistence type="evidence at protein level"/>
<name>AMT2_METJA</name>
<reference key="1">
    <citation type="journal article" date="1996" name="Science">
        <title>Complete genome sequence of the methanogenic archaeon, Methanococcus jannaschii.</title>
        <authorList>
            <person name="Bult C.J."/>
            <person name="White O."/>
            <person name="Olsen G.J."/>
            <person name="Zhou L."/>
            <person name="Fleischmann R.D."/>
            <person name="Sutton G.G."/>
            <person name="Blake J.A."/>
            <person name="FitzGerald L.M."/>
            <person name="Clayton R.A."/>
            <person name="Gocayne J.D."/>
            <person name="Kerlavage A.R."/>
            <person name="Dougherty B.A."/>
            <person name="Tomb J.-F."/>
            <person name="Adams M.D."/>
            <person name="Reich C.I."/>
            <person name="Overbeek R."/>
            <person name="Kirkness E.F."/>
            <person name="Weinstock K.G."/>
            <person name="Merrick J.M."/>
            <person name="Glodek A."/>
            <person name="Scott J.L."/>
            <person name="Geoghagen N.S.M."/>
            <person name="Weidman J.F."/>
            <person name="Fuhrmann J.L."/>
            <person name="Nguyen D."/>
            <person name="Utterback T.R."/>
            <person name="Kelley J.M."/>
            <person name="Peterson J.D."/>
            <person name="Sadow P.W."/>
            <person name="Hanna M.C."/>
            <person name="Cotton M.D."/>
            <person name="Roberts K.M."/>
            <person name="Hurst M.A."/>
            <person name="Kaine B.P."/>
            <person name="Borodovsky M."/>
            <person name="Klenk H.-P."/>
            <person name="Fraser C.M."/>
            <person name="Smith H.O."/>
            <person name="Woese C.R."/>
            <person name="Venter J.C."/>
        </authorList>
    </citation>
    <scope>NUCLEOTIDE SEQUENCE [LARGE SCALE GENOMIC DNA]</scope>
    <source>
        <strain>ATCC 43067 / DSM 2661 / JAL-1 / JCM 10045 / NBRC 100440</strain>
    </source>
</reference>
<comment type="function">
    <text evidence="1">Involved in the uptake of ammonium/ammonia (NH(4)(+)/NH(3)) (By similarity). Transport is electrogenic (By similarity).</text>
</comment>
<comment type="subunit">
    <text evidence="3">Homotrimer (By similarity). Interacts and forms a complex with GlnK2 (By similarity).</text>
</comment>
<comment type="interaction">
    <interactant intactId="EBI-7201308">
        <id>Q58739</id>
    </interactant>
    <interactant intactId="EBI-7201321">
        <id>Q60381</id>
        <label>glnK1</label>
    </interactant>
    <organismsDiffer>false</organismsDiffer>
    <experiments>2</experiments>
</comment>
<comment type="subcellular location">
    <subcellularLocation>
        <location evidence="5">Cell membrane</location>
        <topology evidence="4">Multi-pass membrane protein</topology>
    </subcellularLocation>
</comment>
<comment type="similarity">
    <text evidence="5">Belongs to the ammonia transporter channel (TC 1.A.11.2) family.</text>
</comment>
<gene>
    <name evidence="5" type="primary">amt2</name>
    <name type="ordered locus">MJ1343</name>
</gene>
<organism>
    <name type="scientific">Methanocaldococcus jannaschii (strain ATCC 43067 / DSM 2661 / JAL-1 / JCM 10045 / NBRC 100440)</name>
    <name type="common">Methanococcus jannaschii</name>
    <dbReference type="NCBI Taxonomy" id="243232"/>
    <lineage>
        <taxon>Archaea</taxon>
        <taxon>Methanobacteriati</taxon>
        <taxon>Methanobacteriota</taxon>
        <taxon>Methanomada group</taxon>
        <taxon>Methanococci</taxon>
        <taxon>Methanococcales</taxon>
        <taxon>Methanocaldococcaceae</taxon>
        <taxon>Methanocaldococcus</taxon>
    </lineage>
</organism>